<protein>
    <recommendedName>
        <fullName evidence="1">DNA-directed RNA polymerase subunit alpha</fullName>
        <shortName evidence="1">RNAP subunit alpha</shortName>
        <ecNumber evidence="1">2.7.7.6</ecNumber>
    </recommendedName>
    <alternativeName>
        <fullName evidence="1">RNA polymerase subunit alpha</fullName>
    </alternativeName>
    <alternativeName>
        <fullName evidence="1">Transcriptase subunit alpha</fullName>
    </alternativeName>
</protein>
<accession>Q68WA2</accession>
<comment type="function">
    <text evidence="1">DNA-dependent RNA polymerase catalyzes the transcription of DNA into RNA using the four ribonucleoside triphosphates as substrates.</text>
</comment>
<comment type="catalytic activity">
    <reaction evidence="1">
        <text>RNA(n) + a ribonucleoside 5'-triphosphate = RNA(n+1) + diphosphate</text>
        <dbReference type="Rhea" id="RHEA:21248"/>
        <dbReference type="Rhea" id="RHEA-COMP:14527"/>
        <dbReference type="Rhea" id="RHEA-COMP:17342"/>
        <dbReference type="ChEBI" id="CHEBI:33019"/>
        <dbReference type="ChEBI" id="CHEBI:61557"/>
        <dbReference type="ChEBI" id="CHEBI:140395"/>
        <dbReference type="EC" id="2.7.7.6"/>
    </reaction>
</comment>
<comment type="subunit">
    <text evidence="1">Homodimer. The RNAP catalytic core consists of 2 alpha, 1 beta, 1 beta' and 1 omega subunit. When a sigma factor is associated with the core the holoenzyme is formed, which can initiate transcription.</text>
</comment>
<comment type="domain">
    <text evidence="1">The N-terminal domain is essential for RNAP assembly and basal transcription, whereas the C-terminal domain is involved in interaction with transcriptional regulators and with upstream promoter elements.</text>
</comment>
<comment type="similarity">
    <text evidence="1">Belongs to the RNA polymerase alpha chain family.</text>
</comment>
<reference key="1">
    <citation type="journal article" date="2004" name="J. Bacteriol.">
        <title>Complete genome sequence of Rickettsia typhi and comparison with sequences of other Rickettsiae.</title>
        <authorList>
            <person name="McLeod M.P."/>
            <person name="Qin X."/>
            <person name="Karpathy S.E."/>
            <person name="Gioia J."/>
            <person name="Highlander S.K."/>
            <person name="Fox G.E."/>
            <person name="McNeill T.Z."/>
            <person name="Jiang H."/>
            <person name="Muzny D."/>
            <person name="Jacob L.S."/>
            <person name="Hawes A.C."/>
            <person name="Sodergren E."/>
            <person name="Gill R."/>
            <person name="Hume J."/>
            <person name="Morgan M."/>
            <person name="Fan G."/>
            <person name="Amin A.G."/>
            <person name="Gibbs R.A."/>
            <person name="Hong C."/>
            <person name="Yu X.-J."/>
            <person name="Walker D.H."/>
            <person name="Weinstock G.M."/>
        </authorList>
    </citation>
    <scope>NUCLEOTIDE SEQUENCE [LARGE SCALE GENOMIC DNA]</scope>
    <source>
        <strain>ATCC VR-144 / Wilmington</strain>
    </source>
</reference>
<keyword id="KW-0240">DNA-directed RNA polymerase</keyword>
<keyword id="KW-0548">Nucleotidyltransferase</keyword>
<keyword id="KW-0804">Transcription</keyword>
<keyword id="KW-0808">Transferase</keyword>
<gene>
    <name evidence="1" type="primary">rpoA</name>
    <name type="ordered locus">RT0627</name>
</gene>
<organism>
    <name type="scientific">Rickettsia typhi (strain ATCC VR-144 / Wilmington)</name>
    <dbReference type="NCBI Taxonomy" id="257363"/>
    <lineage>
        <taxon>Bacteria</taxon>
        <taxon>Pseudomonadati</taxon>
        <taxon>Pseudomonadota</taxon>
        <taxon>Alphaproteobacteria</taxon>
        <taxon>Rickettsiales</taxon>
        <taxon>Rickettsiaceae</taxon>
        <taxon>Rickettsieae</taxon>
        <taxon>Rickettsia</taxon>
        <taxon>typhus group</taxon>
    </lineage>
</organism>
<dbReference type="EC" id="2.7.7.6" evidence="1"/>
<dbReference type="EMBL" id="AE017197">
    <property type="protein sequence ID" value="AAU04090.1"/>
    <property type="molecule type" value="Genomic_DNA"/>
</dbReference>
<dbReference type="RefSeq" id="WP_011191070.1">
    <property type="nucleotide sequence ID" value="NC_006142.1"/>
</dbReference>
<dbReference type="SMR" id="Q68WA2"/>
<dbReference type="KEGG" id="rty:RT0627"/>
<dbReference type="eggNOG" id="COG0202">
    <property type="taxonomic scope" value="Bacteria"/>
</dbReference>
<dbReference type="HOGENOM" id="CLU_053084_0_0_5"/>
<dbReference type="OrthoDB" id="9805706at2"/>
<dbReference type="Proteomes" id="UP000000604">
    <property type="component" value="Chromosome"/>
</dbReference>
<dbReference type="GO" id="GO:0005737">
    <property type="term" value="C:cytoplasm"/>
    <property type="evidence" value="ECO:0007669"/>
    <property type="project" value="UniProtKB-ARBA"/>
</dbReference>
<dbReference type="GO" id="GO:0000428">
    <property type="term" value="C:DNA-directed RNA polymerase complex"/>
    <property type="evidence" value="ECO:0007669"/>
    <property type="project" value="UniProtKB-KW"/>
</dbReference>
<dbReference type="GO" id="GO:0003677">
    <property type="term" value="F:DNA binding"/>
    <property type="evidence" value="ECO:0007669"/>
    <property type="project" value="UniProtKB-UniRule"/>
</dbReference>
<dbReference type="GO" id="GO:0003899">
    <property type="term" value="F:DNA-directed RNA polymerase activity"/>
    <property type="evidence" value="ECO:0007669"/>
    <property type="project" value="UniProtKB-UniRule"/>
</dbReference>
<dbReference type="GO" id="GO:0046983">
    <property type="term" value="F:protein dimerization activity"/>
    <property type="evidence" value="ECO:0007669"/>
    <property type="project" value="InterPro"/>
</dbReference>
<dbReference type="GO" id="GO:0006351">
    <property type="term" value="P:DNA-templated transcription"/>
    <property type="evidence" value="ECO:0007669"/>
    <property type="project" value="UniProtKB-UniRule"/>
</dbReference>
<dbReference type="CDD" id="cd06928">
    <property type="entry name" value="RNAP_alpha_NTD"/>
    <property type="match status" value="1"/>
</dbReference>
<dbReference type="FunFam" id="1.10.150.20:FF:000001">
    <property type="entry name" value="DNA-directed RNA polymerase subunit alpha"/>
    <property type="match status" value="1"/>
</dbReference>
<dbReference type="FunFam" id="2.170.120.12:FF:000001">
    <property type="entry name" value="DNA-directed RNA polymerase subunit alpha"/>
    <property type="match status" value="1"/>
</dbReference>
<dbReference type="Gene3D" id="1.10.150.20">
    <property type="entry name" value="5' to 3' exonuclease, C-terminal subdomain"/>
    <property type="match status" value="1"/>
</dbReference>
<dbReference type="Gene3D" id="2.170.120.12">
    <property type="entry name" value="DNA-directed RNA polymerase, insert domain"/>
    <property type="match status" value="1"/>
</dbReference>
<dbReference type="Gene3D" id="3.30.1360.10">
    <property type="entry name" value="RNA polymerase, RBP11-like subunit"/>
    <property type="match status" value="1"/>
</dbReference>
<dbReference type="HAMAP" id="MF_00059">
    <property type="entry name" value="RNApol_bact_RpoA"/>
    <property type="match status" value="1"/>
</dbReference>
<dbReference type="InterPro" id="IPR011262">
    <property type="entry name" value="DNA-dir_RNA_pol_insert"/>
</dbReference>
<dbReference type="InterPro" id="IPR011263">
    <property type="entry name" value="DNA-dir_RNA_pol_RpoA/D/Rpb3"/>
</dbReference>
<dbReference type="InterPro" id="IPR011773">
    <property type="entry name" value="DNA-dir_RpoA"/>
</dbReference>
<dbReference type="InterPro" id="IPR036603">
    <property type="entry name" value="RBP11-like"/>
</dbReference>
<dbReference type="InterPro" id="IPR011260">
    <property type="entry name" value="RNAP_asu_C"/>
</dbReference>
<dbReference type="InterPro" id="IPR036643">
    <property type="entry name" value="RNApol_insert_sf"/>
</dbReference>
<dbReference type="NCBIfam" id="NF003513">
    <property type="entry name" value="PRK05182.1-2"/>
    <property type="match status" value="1"/>
</dbReference>
<dbReference type="NCBIfam" id="NF003519">
    <property type="entry name" value="PRK05182.2-5"/>
    <property type="match status" value="1"/>
</dbReference>
<dbReference type="NCBIfam" id="TIGR02027">
    <property type="entry name" value="rpoA"/>
    <property type="match status" value="1"/>
</dbReference>
<dbReference type="Pfam" id="PF01000">
    <property type="entry name" value="RNA_pol_A_bac"/>
    <property type="match status" value="1"/>
</dbReference>
<dbReference type="Pfam" id="PF03118">
    <property type="entry name" value="RNA_pol_A_CTD"/>
    <property type="match status" value="1"/>
</dbReference>
<dbReference type="Pfam" id="PF01193">
    <property type="entry name" value="RNA_pol_L"/>
    <property type="match status" value="1"/>
</dbReference>
<dbReference type="SMART" id="SM00662">
    <property type="entry name" value="RPOLD"/>
    <property type="match status" value="1"/>
</dbReference>
<dbReference type="SUPFAM" id="SSF47789">
    <property type="entry name" value="C-terminal domain of RNA polymerase alpha subunit"/>
    <property type="match status" value="1"/>
</dbReference>
<dbReference type="SUPFAM" id="SSF56553">
    <property type="entry name" value="Insert subdomain of RNA polymerase alpha subunit"/>
    <property type="match status" value="1"/>
</dbReference>
<dbReference type="SUPFAM" id="SSF55257">
    <property type="entry name" value="RBP11-like subunits of RNA polymerase"/>
    <property type="match status" value="1"/>
</dbReference>
<feature type="chain" id="PRO_0000175370" description="DNA-directed RNA polymerase subunit alpha">
    <location>
        <begin position="1"/>
        <end position="340"/>
    </location>
</feature>
<feature type="region of interest" description="Alpha N-terminal domain (alpha-NTD)" evidence="1">
    <location>
        <begin position="1"/>
        <end position="236"/>
    </location>
</feature>
<feature type="region of interest" description="Alpha C-terminal domain (alpha-CTD)" evidence="1">
    <location>
        <begin position="251"/>
        <end position="340"/>
    </location>
</feature>
<proteinExistence type="inferred from homology"/>
<name>RPOA_RICTY</name>
<evidence type="ECO:0000255" key="1">
    <source>
        <dbReference type="HAMAP-Rule" id="MF_00059"/>
    </source>
</evidence>
<sequence>MLSLSKNWNTLIKPNRVTYENFPETNNKAKIIVEPLERGFGLTLGNAMRRVLLSSLQGAAITSIKIPAIEHEFSSIPGVQEDVSEVILNIKGIEVKMHVSEKRIMKLKATGPCVVTAGMIDTGHDVEILNPNHVICNLAKNKQLEMELTCKVGKGYVLSTNSYEDNLPIGEIAIDALFNPVKSVTYKVENTRVGQVTDYDKLIIFVETNGDVLPEMAVGLAARILQEQLQLFIAFEEQEEDKQVKTDSLPFSPYLLKRVDELELSVRSANCLKNDNIIYIGDLVKRTESDMLRTPNFGRKSLNEIKEILAKFNLRFGMDVPDWPPENIQELSKRYEDSYN</sequence>